<feature type="chain" id="PRO_0000299426" description="Uncharacterized peptidase SAS1635">
    <location>
        <begin position="1"/>
        <end position="351"/>
    </location>
</feature>
<feature type="binding site" evidence="1">
    <location>
        <position position="215"/>
    </location>
    <ligand>
        <name>Mn(2+)</name>
        <dbReference type="ChEBI" id="CHEBI:29035"/>
        <label>2</label>
    </ligand>
</feature>
<feature type="binding site" evidence="1">
    <location>
        <position position="226"/>
    </location>
    <ligand>
        <name>Mn(2+)</name>
        <dbReference type="ChEBI" id="CHEBI:29035"/>
        <label>1</label>
    </ligand>
</feature>
<feature type="binding site" evidence="1">
    <location>
        <position position="226"/>
    </location>
    <ligand>
        <name>Mn(2+)</name>
        <dbReference type="ChEBI" id="CHEBI:29035"/>
        <label>2</label>
    </ligand>
</feature>
<feature type="binding site" evidence="1">
    <location>
        <position position="290"/>
    </location>
    <ligand>
        <name>Mn(2+)</name>
        <dbReference type="ChEBI" id="CHEBI:29035"/>
        <label>1</label>
    </ligand>
</feature>
<feature type="binding site" evidence="1">
    <location>
        <position position="319"/>
    </location>
    <ligand>
        <name>Mn(2+)</name>
        <dbReference type="ChEBI" id="CHEBI:29035"/>
        <label>1</label>
    </ligand>
</feature>
<feature type="binding site" evidence="1">
    <location>
        <position position="333"/>
    </location>
    <ligand>
        <name>Mn(2+)</name>
        <dbReference type="ChEBI" id="CHEBI:29035"/>
        <label>1</label>
    </ligand>
</feature>
<feature type="binding site" evidence="1">
    <location>
        <position position="333"/>
    </location>
    <ligand>
        <name>Mn(2+)</name>
        <dbReference type="ChEBI" id="CHEBI:29035"/>
        <label>2</label>
    </ligand>
</feature>
<keyword id="KW-0378">Hydrolase</keyword>
<keyword id="KW-0464">Manganese</keyword>
<keyword id="KW-0479">Metal-binding</keyword>
<proteinExistence type="inferred from homology"/>
<organism>
    <name type="scientific">Staphylococcus aureus (strain MSSA476)</name>
    <dbReference type="NCBI Taxonomy" id="282459"/>
    <lineage>
        <taxon>Bacteria</taxon>
        <taxon>Bacillati</taxon>
        <taxon>Bacillota</taxon>
        <taxon>Bacilli</taxon>
        <taxon>Bacillales</taxon>
        <taxon>Staphylococcaceae</taxon>
        <taxon>Staphylococcus</taxon>
    </lineage>
</organism>
<evidence type="ECO:0000255" key="1"/>
<evidence type="ECO:0000305" key="2"/>
<comment type="cofactor">
    <cofactor evidence="2">
        <name>Mn(2+)</name>
        <dbReference type="ChEBI" id="CHEBI:29035"/>
    </cofactor>
    <text evidence="2">Binds 2 manganese ions per subunit.</text>
</comment>
<comment type="similarity">
    <text evidence="2">Belongs to the peptidase M24B family.</text>
</comment>
<sequence length="351" mass="39607">MTKISKIIDELNNQQADAAWITTPLNVYYFTGYRSEPHERLFALLIKKDGKQVLFCPKMEVEEVKASPFTGEIVGYLDTENPFSLYPQTINKLLIESEHLTVARQKQLISGFNVNSFGDVDLTIKQLRNIKSEDEISKIRKAAELADKCIEIGVSYLKEGVTEREVVNHIEQTIKQYGVNEMSFDTMVLFGDHAASPHGTPGDRRLKSNEYVLFDLGVIYEHYCSDMTRTIKFGEPSKEAQEIYNIVLEAETSAIQAIKPGIPLKDIDHIARNIISEKGYGEYFPHRLGHGLGLQEHEYQDVSSTNSNLLEAGMVITIEPGIYVPGVAGVRIEDDILVTNEGYEVLTHYEK</sequence>
<reference key="1">
    <citation type="journal article" date="2004" name="Proc. Natl. Acad. Sci. U.S.A.">
        <title>Complete genomes of two clinical Staphylococcus aureus strains: evidence for the rapid evolution of virulence and drug resistance.</title>
        <authorList>
            <person name="Holden M.T.G."/>
            <person name="Feil E.J."/>
            <person name="Lindsay J.A."/>
            <person name="Peacock S.J."/>
            <person name="Day N.P.J."/>
            <person name="Enright M.C."/>
            <person name="Foster T.J."/>
            <person name="Moore C.E."/>
            <person name="Hurst L."/>
            <person name="Atkin R."/>
            <person name="Barron A."/>
            <person name="Bason N."/>
            <person name="Bentley S.D."/>
            <person name="Chillingworth C."/>
            <person name="Chillingworth T."/>
            <person name="Churcher C."/>
            <person name="Clark L."/>
            <person name="Corton C."/>
            <person name="Cronin A."/>
            <person name="Doggett J."/>
            <person name="Dowd L."/>
            <person name="Feltwell T."/>
            <person name="Hance Z."/>
            <person name="Harris B."/>
            <person name="Hauser H."/>
            <person name="Holroyd S."/>
            <person name="Jagels K."/>
            <person name="James K.D."/>
            <person name="Lennard N."/>
            <person name="Line A."/>
            <person name="Mayes R."/>
            <person name="Moule S."/>
            <person name="Mungall K."/>
            <person name="Ormond D."/>
            <person name="Quail M.A."/>
            <person name="Rabbinowitsch E."/>
            <person name="Rutherford K.M."/>
            <person name="Sanders M."/>
            <person name="Sharp S."/>
            <person name="Simmonds M."/>
            <person name="Stevens K."/>
            <person name="Whitehead S."/>
            <person name="Barrell B.G."/>
            <person name="Spratt B.G."/>
            <person name="Parkhill J."/>
        </authorList>
    </citation>
    <scope>NUCLEOTIDE SEQUENCE [LARGE SCALE GENOMIC DNA]</scope>
    <source>
        <strain>MSSA476</strain>
    </source>
</reference>
<accession>Q6G8L9</accession>
<protein>
    <recommendedName>
        <fullName>Uncharacterized peptidase SAS1635</fullName>
        <ecNumber>3.4.-.-</ecNumber>
    </recommendedName>
</protein>
<dbReference type="EC" id="3.4.-.-"/>
<dbReference type="EMBL" id="BX571857">
    <property type="protein sequence ID" value="CAG43437.1"/>
    <property type="molecule type" value="Genomic_DNA"/>
</dbReference>
<dbReference type="RefSeq" id="WP_000161666.1">
    <property type="nucleotide sequence ID" value="NC_002953.3"/>
</dbReference>
<dbReference type="SMR" id="Q6G8L9"/>
<dbReference type="KEGG" id="sas:SAS1635"/>
<dbReference type="HOGENOM" id="CLU_017266_4_2_9"/>
<dbReference type="GO" id="GO:0016787">
    <property type="term" value="F:hydrolase activity"/>
    <property type="evidence" value="ECO:0007669"/>
    <property type="project" value="UniProtKB-KW"/>
</dbReference>
<dbReference type="GO" id="GO:0046872">
    <property type="term" value="F:metal ion binding"/>
    <property type="evidence" value="ECO:0007669"/>
    <property type="project" value="UniProtKB-KW"/>
</dbReference>
<dbReference type="CDD" id="cd01092">
    <property type="entry name" value="APP-like"/>
    <property type="match status" value="1"/>
</dbReference>
<dbReference type="FunFam" id="3.90.230.10:FF:000014">
    <property type="entry name" value="Aminopeptidase P family protein"/>
    <property type="match status" value="1"/>
</dbReference>
<dbReference type="Gene3D" id="3.90.230.10">
    <property type="entry name" value="Creatinase/methionine aminopeptidase superfamily"/>
    <property type="match status" value="1"/>
</dbReference>
<dbReference type="Gene3D" id="3.40.350.10">
    <property type="entry name" value="Creatinase/prolidase N-terminal domain"/>
    <property type="match status" value="1"/>
</dbReference>
<dbReference type="InterPro" id="IPR029149">
    <property type="entry name" value="Creatin/AminoP/Spt16_N"/>
</dbReference>
<dbReference type="InterPro" id="IPR036005">
    <property type="entry name" value="Creatinase/aminopeptidase-like"/>
</dbReference>
<dbReference type="InterPro" id="IPR000587">
    <property type="entry name" value="Creatinase_N"/>
</dbReference>
<dbReference type="InterPro" id="IPR000994">
    <property type="entry name" value="Pept_M24"/>
</dbReference>
<dbReference type="InterPro" id="IPR050659">
    <property type="entry name" value="Peptidase_M24B"/>
</dbReference>
<dbReference type="InterPro" id="IPR001131">
    <property type="entry name" value="Peptidase_M24B_aminopep-P_CS"/>
</dbReference>
<dbReference type="PANTHER" id="PTHR46112">
    <property type="entry name" value="AMINOPEPTIDASE"/>
    <property type="match status" value="1"/>
</dbReference>
<dbReference type="PANTHER" id="PTHR46112:SF10">
    <property type="entry name" value="DIPEPTIDASE YKVY-RELATED"/>
    <property type="match status" value="1"/>
</dbReference>
<dbReference type="Pfam" id="PF01321">
    <property type="entry name" value="Creatinase_N"/>
    <property type="match status" value="1"/>
</dbReference>
<dbReference type="Pfam" id="PF00557">
    <property type="entry name" value="Peptidase_M24"/>
    <property type="match status" value="1"/>
</dbReference>
<dbReference type="SUPFAM" id="SSF55920">
    <property type="entry name" value="Creatinase/aminopeptidase"/>
    <property type="match status" value="1"/>
</dbReference>
<dbReference type="SUPFAM" id="SSF53092">
    <property type="entry name" value="Creatinase/prolidase N-terminal domain"/>
    <property type="match status" value="1"/>
</dbReference>
<dbReference type="PROSITE" id="PS00491">
    <property type="entry name" value="PROLINE_PEPTIDASE"/>
    <property type="match status" value="1"/>
</dbReference>
<gene>
    <name type="ordered locus">SAS1635</name>
</gene>
<name>Y1635_STAAS</name>